<keyword id="KW-0002">3D-structure</keyword>
<keyword id="KW-0007">Acetylation</keyword>
<keyword id="KW-0067">ATP-binding</keyword>
<keyword id="KW-0143">Chaperone</keyword>
<keyword id="KW-0186">Copper</keyword>
<keyword id="KW-0963">Cytoplasm</keyword>
<keyword id="KW-0413">Isomerase</keyword>
<keyword id="KW-0479">Metal-binding</keyword>
<keyword id="KW-0547">Nucleotide-binding</keyword>
<keyword id="KW-0597">Phosphoprotein</keyword>
<keyword id="KW-1185">Reference proteome</keyword>
<proteinExistence type="evidence at protein level"/>
<dbReference type="EC" id="5.6.1.7" evidence="1"/>
<dbReference type="EMBL" id="X60350">
    <property type="protein sequence ID" value="CAA42909.1"/>
    <property type="molecule type" value="Genomic_DNA"/>
</dbReference>
<dbReference type="EMBL" id="AL123456">
    <property type="protein sequence ID" value="CCP46239.1"/>
    <property type="molecule type" value="Genomic_DNA"/>
</dbReference>
<dbReference type="PIR" id="F70737">
    <property type="entry name" value="F70737"/>
</dbReference>
<dbReference type="RefSeq" id="NP_217934.1">
    <property type="nucleotide sequence ID" value="NC_000962.3"/>
</dbReference>
<dbReference type="PDB" id="3M6C">
    <property type="method" value="X-ray"/>
    <property type="resolution" value="2.20 A"/>
    <property type="chains" value="A=184-377"/>
</dbReference>
<dbReference type="PDBsum" id="3M6C"/>
<dbReference type="SMR" id="P9WPE9"/>
<dbReference type="FunCoup" id="P9WPE9">
    <property type="interactions" value="380"/>
</dbReference>
<dbReference type="STRING" id="83332.Rv3417c"/>
<dbReference type="MoonProt" id="P9WPE9"/>
<dbReference type="iPTMnet" id="P9WPE9"/>
<dbReference type="PaxDb" id="83332-Rv3417c"/>
<dbReference type="DNASU" id="887877"/>
<dbReference type="GeneID" id="887877"/>
<dbReference type="KEGG" id="mtu:Rv3417c"/>
<dbReference type="KEGG" id="mtv:RVBD_3417c"/>
<dbReference type="TubercuList" id="Rv3417c"/>
<dbReference type="eggNOG" id="COG0459">
    <property type="taxonomic scope" value="Bacteria"/>
</dbReference>
<dbReference type="InParanoid" id="P9WPE9"/>
<dbReference type="OrthoDB" id="9766614at2"/>
<dbReference type="PhylomeDB" id="P9WPE9"/>
<dbReference type="EvolutionaryTrace" id="P9WPE9"/>
<dbReference type="PRO" id="PR:P9WPE9"/>
<dbReference type="Proteomes" id="UP000001584">
    <property type="component" value="Chromosome"/>
</dbReference>
<dbReference type="GO" id="GO:0043590">
    <property type="term" value="C:bacterial nucleoid"/>
    <property type="evidence" value="ECO:0000314"/>
    <property type="project" value="MTBBASE"/>
</dbReference>
<dbReference type="GO" id="GO:1990220">
    <property type="term" value="C:GroEL-GroES complex"/>
    <property type="evidence" value="ECO:0000318"/>
    <property type="project" value="GO_Central"/>
</dbReference>
<dbReference type="GO" id="GO:0009274">
    <property type="term" value="C:peptidoglycan-based cell wall"/>
    <property type="evidence" value="ECO:0007005"/>
    <property type="project" value="MTBBASE"/>
</dbReference>
<dbReference type="GO" id="GO:0005886">
    <property type="term" value="C:plasma membrane"/>
    <property type="evidence" value="ECO:0007005"/>
    <property type="project" value="MTBBASE"/>
</dbReference>
<dbReference type="GO" id="GO:0005524">
    <property type="term" value="F:ATP binding"/>
    <property type="evidence" value="ECO:0000318"/>
    <property type="project" value="GO_Central"/>
</dbReference>
<dbReference type="GO" id="GO:0140662">
    <property type="term" value="F:ATP-dependent protein folding chaperone"/>
    <property type="evidence" value="ECO:0007669"/>
    <property type="project" value="InterPro"/>
</dbReference>
<dbReference type="GO" id="GO:0016853">
    <property type="term" value="F:isomerase activity"/>
    <property type="evidence" value="ECO:0007669"/>
    <property type="project" value="UniProtKB-KW"/>
</dbReference>
<dbReference type="GO" id="GO:0046872">
    <property type="term" value="F:metal ion binding"/>
    <property type="evidence" value="ECO:0007669"/>
    <property type="project" value="UniProtKB-KW"/>
</dbReference>
<dbReference type="GO" id="GO:0003697">
    <property type="term" value="F:single-stranded DNA binding"/>
    <property type="evidence" value="ECO:0000314"/>
    <property type="project" value="MTBBASE"/>
</dbReference>
<dbReference type="GO" id="GO:0051082">
    <property type="term" value="F:unfolded protein binding"/>
    <property type="evidence" value="ECO:0000318"/>
    <property type="project" value="GO_Central"/>
</dbReference>
<dbReference type="GO" id="GO:0051085">
    <property type="term" value="P:chaperone cofactor-dependent protein refolding"/>
    <property type="evidence" value="ECO:0000318"/>
    <property type="project" value="GO_Central"/>
</dbReference>
<dbReference type="GO" id="GO:0061077">
    <property type="term" value="P:chaperone-mediated protein folding"/>
    <property type="evidence" value="ECO:0000314"/>
    <property type="project" value="UniProtKB"/>
</dbReference>
<dbReference type="GO" id="GO:0042262">
    <property type="term" value="P:DNA protection"/>
    <property type="evidence" value="ECO:0000314"/>
    <property type="project" value="MTBBASE"/>
</dbReference>
<dbReference type="GO" id="GO:0090143">
    <property type="term" value="P:nucleoid organization"/>
    <property type="evidence" value="ECO:0000314"/>
    <property type="project" value="MTBBASE"/>
</dbReference>
<dbReference type="GO" id="GO:0042026">
    <property type="term" value="P:protein refolding"/>
    <property type="evidence" value="ECO:0007669"/>
    <property type="project" value="UniProtKB-UniRule"/>
</dbReference>
<dbReference type="GO" id="GO:0009408">
    <property type="term" value="P:response to heat"/>
    <property type="evidence" value="ECO:0000270"/>
    <property type="project" value="MTBBASE"/>
</dbReference>
<dbReference type="CDD" id="cd03344">
    <property type="entry name" value="GroEL"/>
    <property type="match status" value="1"/>
</dbReference>
<dbReference type="FunFam" id="3.50.7.10:FF:000001">
    <property type="entry name" value="60 kDa chaperonin"/>
    <property type="match status" value="1"/>
</dbReference>
<dbReference type="Gene3D" id="3.50.7.10">
    <property type="entry name" value="GroEL"/>
    <property type="match status" value="1"/>
</dbReference>
<dbReference type="Gene3D" id="1.10.560.10">
    <property type="entry name" value="GroEL-like equatorial domain"/>
    <property type="match status" value="1"/>
</dbReference>
<dbReference type="Gene3D" id="3.30.260.10">
    <property type="entry name" value="TCP-1-like chaperonin intermediate domain"/>
    <property type="match status" value="1"/>
</dbReference>
<dbReference type="HAMAP" id="MF_00600">
    <property type="entry name" value="CH60"/>
    <property type="match status" value="1"/>
</dbReference>
<dbReference type="InterPro" id="IPR018370">
    <property type="entry name" value="Chaperonin_Cpn60_CS"/>
</dbReference>
<dbReference type="InterPro" id="IPR001844">
    <property type="entry name" value="Cpn60/GroEL"/>
</dbReference>
<dbReference type="InterPro" id="IPR002423">
    <property type="entry name" value="Cpn60/GroEL/TCP-1"/>
</dbReference>
<dbReference type="InterPro" id="IPR027409">
    <property type="entry name" value="GroEL-like_apical_dom_sf"/>
</dbReference>
<dbReference type="InterPro" id="IPR027413">
    <property type="entry name" value="GROEL-like_equatorial_sf"/>
</dbReference>
<dbReference type="InterPro" id="IPR027410">
    <property type="entry name" value="TCP-1-like_intermed_sf"/>
</dbReference>
<dbReference type="NCBIfam" id="TIGR02348">
    <property type="entry name" value="GroEL"/>
    <property type="match status" value="1"/>
</dbReference>
<dbReference type="NCBIfam" id="NF000592">
    <property type="entry name" value="PRK00013.1"/>
    <property type="match status" value="1"/>
</dbReference>
<dbReference type="NCBIfam" id="NF009487">
    <property type="entry name" value="PRK12849.1"/>
    <property type="match status" value="1"/>
</dbReference>
<dbReference type="NCBIfam" id="NF009488">
    <property type="entry name" value="PRK12850.1"/>
    <property type="match status" value="1"/>
</dbReference>
<dbReference type="NCBIfam" id="NF009489">
    <property type="entry name" value="PRK12851.1"/>
    <property type="match status" value="1"/>
</dbReference>
<dbReference type="PANTHER" id="PTHR45633">
    <property type="entry name" value="60 KDA HEAT SHOCK PROTEIN, MITOCHONDRIAL"/>
    <property type="match status" value="1"/>
</dbReference>
<dbReference type="Pfam" id="PF00118">
    <property type="entry name" value="Cpn60_TCP1"/>
    <property type="match status" value="1"/>
</dbReference>
<dbReference type="PRINTS" id="PR00298">
    <property type="entry name" value="CHAPERONIN60"/>
</dbReference>
<dbReference type="SUPFAM" id="SSF52029">
    <property type="entry name" value="GroEL apical domain-like"/>
    <property type="match status" value="1"/>
</dbReference>
<dbReference type="SUPFAM" id="SSF48592">
    <property type="entry name" value="GroEL equatorial domain-like"/>
    <property type="match status" value="1"/>
</dbReference>
<dbReference type="SUPFAM" id="SSF54849">
    <property type="entry name" value="GroEL-intermediate domain like"/>
    <property type="match status" value="1"/>
</dbReference>
<dbReference type="PROSITE" id="PS00296">
    <property type="entry name" value="CHAPERONINS_CPN60"/>
    <property type="match status" value="1"/>
</dbReference>
<sequence length="539" mass="55877">MSKLIEYDETARRAMEVGMDKLADTVRVTLGPRGRHVVLAKAFGGPTVTNDGVTVAREIELEDPFEDLGAQLVKSVATKTNDVAGDGTTTATILAQALIKGGLRLVAAGVNPIALGVGIGKAADAVSEALLASATPVSGKTGIAQVATVSSRDEQIGDLVGEAMSKVGHDGVVSVEESSTLGTELEFTEGIGFDKGFLSAYFVTDFDNQQAVLEDALILLHQDKISSLPDLLPLLEKVAGTGKPLLIVAEDVEGEALATLVVNAIRKTLKAVAVKGPYFGDRRKAFLEDLAVVTGGQVVNPDAGMVLREVGLEVLGSARRVVVSKDDTVIVDGGGTAEAVANRAKHLRAEIDKSDSDWDREKLGERLAKLAGGVAVIKVGAATETALKERKESVEDAVAAAKAAVEEGIVPGGGASLIHQARKALTELRASLTGDEVLGVDVFSEALAAPLFWIAANAGLDGSVVVNKVSELPAGHGLNVNTLSYGDLAADGVIDPVKVTRSAVLNASSVARMVLTTETVVVDKPAKAEDHDHHHGHAH</sequence>
<organism>
    <name type="scientific">Mycobacterium tuberculosis (strain ATCC 25618 / H37Rv)</name>
    <dbReference type="NCBI Taxonomy" id="83332"/>
    <lineage>
        <taxon>Bacteria</taxon>
        <taxon>Bacillati</taxon>
        <taxon>Actinomycetota</taxon>
        <taxon>Actinomycetes</taxon>
        <taxon>Mycobacteriales</taxon>
        <taxon>Mycobacteriaceae</taxon>
        <taxon>Mycobacterium</taxon>
        <taxon>Mycobacterium tuberculosis complex</taxon>
    </lineage>
</organism>
<feature type="initiator methionine" description="Removed" evidence="9">
    <location>
        <position position="1"/>
    </location>
</feature>
<feature type="chain" id="PRO_0000063451" description="Chaperonin GroEL 1">
    <location>
        <begin position="2"/>
        <end position="539"/>
    </location>
</feature>
<feature type="binding site" evidence="1">
    <location>
        <begin position="29"/>
        <end position="32"/>
    </location>
    <ligand>
        <name>ATP</name>
        <dbReference type="ChEBI" id="CHEBI:30616"/>
    </ligand>
</feature>
<feature type="binding site" evidence="1">
    <location>
        <begin position="86"/>
        <end position="90"/>
    </location>
    <ligand>
        <name>ATP</name>
        <dbReference type="ChEBI" id="CHEBI:30616"/>
    </ligand>
</feature>
<feature type="binding site" evidence="1">
    <location>
        <position position="413"/>
    </location>
    <ligand>
        <name>ATP</name>
        <dbReference type="ChEBI" id="CHEBI:30616"/>
    </ligand>
</feature>
<feature type="binding site" evidence="1">
    <location>
        <position position="495"/>
    </location>
    <ligand>
        <name>ATP</name>
        <dbReference type="ChEBI" id="CHEBI:30616"/>
    </ligand>
</feature>
<feature type="modified residue" description="N-acetylserine" evidence="9">
    <location>
        <position position="2"/>
    </location>
</feature>
<feature type="modified residue" description="Phosphothreonine" evidence="4">
    <location>
        <position position="25"/>
    </location>
</feature>
<feature type="modified residue" description="Phosphothreonine" evidence="4">
    <location>
        <position position="54"/>
    </location>
</feature>
<feature type="modified residue" description="Phosphoserine; in tetradecamer" evidence="5">
    <location>
        <position position="393"/>
    </location>
</feature>
<feature type="sequence variant" description="In strain: Erdman.">
    <original>N</original>
    <variation>K</variation>
    <location>
        <position position="467"/>
    </location>
</feature>
<feature type="mutagenesis site" description="Lack of phosphorylation by PknF; when associated with A-54." evidence="4">
    <original>T</original>
    <variation>A</variation>
    <location>
        <position position="25"/>
    </location>
</feature>
<feature type="mutagenesis site" description="Lack of phosphorylation by PknF; when associated with A-25." evidence="4">
    <original>T</original>
    <variation>A</variation>
    <location>
        <position position="54"/>
    </location>
</feature>
<feature type="mutagenesis site" description="Cannot bind nickel, cobalt or copper." evidence="10">
    <location>
        <begin position="522"/>
        <end position="539"/>
    </location>
</feature>
<feature type="strand" evidence="17">
    <location>
        <begin position="189"/>
        <end position="194"/>
    </location>
</feature>
<feature type="helix" evidence="17">
    <location>
        <begin position="200"/>
        <end position="202"/>
    </location>
</feature>
<feature type="turn" evidence="17">
    <location>
        <begin position="206"/>
        <end position="209"/>
    </location>
</feature>
<feature type="strand" evidence="17">
    <location>
        <begin position="210"/>
        <end position="225"/>
    </location>
</feature>
<feature type="helix" evidence="17">
    <location>
        <begin position="228"/>
        <end position="241"/>
    </location>
</feature>
<feature type="strand" evidence="17">
    <location>
        <begin position="245"/>
        <end position="252"/>
    </location>
</feature>
<feature type="helix" evidence="17">
    <location>
        <begin position="254"/>
        <end position="265"/>
    </location>
</feature>
<feature type="strand" evidence="17">
    <location>
        <begin position="271"/>
        <end position="275"/>
    </location>
</feature>
<feature type="helix" evidence="17">
    <location>
        <begin position="280"/>
        <end position="294"/>
    </location>
</feature>
<feature type="helix" evidence="17">
    <location>
        <begin position="301"/>
        <end position="303"/>
    </location>
</feature>
<feature type="helix" evidence="17">
    <location>
        <begin position="307"/>
        <end position="309"/>
    </location>
</feature>
<feature type="helix" evidence="17">
    <location>
        <begin position="312"/>
        <end position="314"/>
    </location>
</feature>
<feature type="strand" evidence="17">
    <location>
        <begin position="316"/>
        <end position="323"/>
    </location>
</feature>
<feature type="strand" evidence="17">
    <location>
        <begin position="328"/>
        <end position="333"/>
    </location>
</feature>
<feature type="helix" evidence="17">
    <location>
        <begin position="337"/>
        <end position="352"/>
    </location>
</feature>
<feature type="helix" evidence="17">
    <location>
        <begin position="357"/>
        <end position="373"/>
    </location>
</feature>
<gene>
    <name evidence="1 13" type="primary">groEL1</name>
    <name evidence="12" type="synonym">cpn60.1</name>
    <name evidence="1" type="synonym">groL1</name>
    <name type="ordered locus">Rv3417c</name>
    <name type="ORF">MTCY78.12</name>
</gene>
<protein>
    <recommendedName>
        <fullName evidence="1">Chaperonin GroEL 1</fullName>
        <ecNumber evidence="1">5.6.1.7</ecNumber>
    </recommendedName>
    <alternativeName>
        <fullName evidence="1">60 kDa chaperonin 1</fullName>
    </alternativeName>
    <alternativeName>
        <fullName evidence="1">Chaperonin-60 1</fullName>
        <shortName evidence="1">Cpn60 1</shortName>
    </alternativeName>
</protein>
<comment type="function">
    <text evidence="2 5 6 11">Prevents aggregation of substrate proteins and promotes their refolding (PubMed:15327959, PubMed:19717599, PubMed:21094166). In vitro, activity may be independent of the presence or absence of the GroES co-chaperonin or ATP (PubMed:15327959). Shows weak ATPase activity (PubMed:15327959, PubMed:32812602).</text>
</comment>
<comment type="function">
    <text evidence="8 10 11">Involved in copper homeostasis (PubMed:32808291, PubMed:32812602). Binds copper and may help maintaining copper homeostasis when copper is present in excess, notably in the macrophage phagosome, by acting as a metal storage protein (PubMed:32808291, PubMed:32812602). Could be involved in copper resistance during mycobacterial biofilm formation (PubMed:32812602). Protects from copper stress in vitro (PubMed:32808291). Can also bind other metals, but binds copper with relatively higher affinity compared to nickel and cobalt (PubMed:32808291). May play an important role in survival under low aeration by affecting the expression of genes known for hypoxia response (PubMed:26822628).</text>
</comment>
<comment type="catalytic activity">
    <reaction evidence="1">
        <text>ATP + H2O + a folded polypeptide = ADP + phosphate + an unfolded polypeptide.</text>
        <dbReference type="EC" id="5.6.1.7"/>
    </reaction>
</comment>
<comment type="activity regulation">
    <text evidence="5 11">Oligomerization, which is mediated by phosphorylation, is required for chaperone activity. Lower oligomeric GroELs possess substrate binding activity but are inefficient in promoting refolding (PubMed:19717599). The binding of copper protects GroEL1 from destabilization and increases its ATPase activity (PubMed:32812602).</text>
</comment>
<comment type="biophysicochemical properties">
    <kinetics>
        <text evidence="2">kcat for ATPase activity is 0.16 min(-1).</text>
    </kinetics>
</comment>
<comment type="subunit">
    <text evidence="1 2 5 10 11 14">Forms a cylinder of 14 subunits composed of two heptameric rings stacked back-to-back (Probable). Also exists as lower oligomers, including monomeric, dimeric and heptameric forms (PubMed:15327959, PubMed:19717599, PubMed:32808291, PubMed:32812602). The switch between the single-ring (heptameric) and double-ring (tetradecameric) forms is mediated by phosphorylation on Ser-393 (PubMed:19717599). Interacts with the co-chaperonin GroES (By similarity).</text>
</comment>
<comment type="subcellular location">
    <subcellularLocation>
        <location evidence="1">Cytoplasm</location>
    </subcellularLocation>
</comment>
<comment type="induction">
    <text evidence="3">In response to heat shock (45 degrees Celsius) and hyperosmolarity.</text>
</comment>
<comment type="domain">
    <text evidence="6 10">Each subunit is composed of an apical domain, an intermediate domain and an equatorial domain (PubMed:32808291). The apical domain is sufficient for substrate recognition (PubMed:21094166). Contains a characteristic histidine-rich C terminus which is essential for copper binding (PubMed:32808291). Copper binding causes conformational rearrangement (PubMed:32808291).</text>
</comment>
<comment type="PTM">
    <text evidence="4 5">Phosphorylated on Thr-25 and Thr-54 by PknF (PubMed:19201798). Phosphorylated on Ser-393 by an unknown kinase (PubMed:19717599).</text>
</comment>
<comment type="PTM">
    <text evidence="9">N-terminus is acetylated by RimI.</text>
</comment>
<comment type="disruption phenotype">
    <text evidence="3 8 10">Not essential (PubMed:18227175, PubMed:26822628). Increased heat sensitivity (at 55 degrees Celsius) (PubMed:18227175). Inactivation of the gene does not affect cell wall lipids, or growth and survival in macrophages, but mutant shows slower growth in the mouse lung and spleen in early infection and fails to produce granulomatous inflammation in either mice or guinea pigs (PubMed:18227175). This is associated with reduced cytokine expression in infected animals and macrophages (PubMed:18227175). Knockout of the gene leads to differential gene expression under low aeration stress, including down regulation of genes in copper response and genes encoding members of folate synthesis super pathway (PubMed:26822628). Survival under low aeration is significantly compromised in this knockout mutant (PubMed:26822628). Knockout mutant shows increased sensitivity to Cu(2+) (PubMed:32808291).</text>
</comment>
<comment type="miscellaneous">
    <text evidence="15">M.tuberculosis contains two copies of the groEL gene, groEL1 and groEL2. GroEL2 is probably the housekeeping chaperonin, with the GroEL1 proteins having evolved, following an ancestral gene duplication event, to take on a more specialized role or roles.</text>
</comment>
<comment type="miscellaneous">
    <text evidence="3 5 7">Recombinant GroEL of M.tuberculosis is unable to act as effective molecular chaperone when expressed in Escherichia coli (PubMed:18227175, PubMed:19717599, PubMed:22834700). Although M.tuberculosis GroEL1 is capable of oligomerization in its native environment, it cannot do the same in E.coli, which probably explains its lack of chaperone activity in E.coli (PubMed:19717599). Can complement M.smegmatis mutants (PubMed:22834700).</text>
</comment>
<comment type="similarity">
    <text evidence="1">Belongs to the chaperonin (HSP60) family.</text>
</comment>
<reference key="1">
    <citation type="journal article" date="1993" name="Proc. Natl. Acad. Sci. U.S.A.">
        <title>Mycobacterium tuberculosis expresses two chaperonin-60 homologs.</title>
        <authorList>
            <person name="Kong T.H."/>
            <person name="Coates A.R.M."/>
            <person name="Butcher P.D."/>
            <person name="Hickman C.J."/>
            <person name="Shinnick T.M."/>
        </authorList>
    </citation>
    <scope>NUCLEOTIDE SEQUENCE [GENOMIC DNA]</scope>
    <source>
        <strain>ATCC 35801 / TMC 107 / Erdman</strain>
    </source>
</reference>
<reference key="2">
    <citation type="journal article" date="1998" name="Nature">
        <title>Deciphering the biology of Mycobacterium tuberculosis from the complete genome sequence.</title>
        <authorList>
            <person name="Cole S.T."/>
            <person name="Brosch R."/>
            <person name="Parkhill J."/>
            <person name="Garnier T."/>
            <person name="Churcher C.M."/>
            <person name="Harris D.E."/>
            <person name="Gordon S.V."/>
            <person name="Eiglmeier K."/>
            <person name="Gas S."/>
            <person name="Barry C.E. III"/>
            <person name="Tekaia F."/>
            <person name="Badcock K."/>
            <person name="Basham D."/>
            <person name="Brown D."/>
            <person name="Chillingworth T."/>
            <person name="Connor R."/>
            <person name="Davies R.M."/>
            <person name="Devlin K."/>
            <person name="Feltwell T."/>
            <person name="Gentles S."/>
            <person name="Hamlin N."/>
            <person name="Holroyd S."/>
            <person name="Hornsby T."/>
            <person name="Jagels K."/>
            <person name="Krogh A."/>
            <person name="McLean J."/>
            <person name="Moule S."/>
            <person name="Murphy L.D."/>
            <person name="Oliver S."/>
            <person name="Osborne J."/>
            <person name="Quail M.A."/>
            <person name="Rajandream M.A."/>
            <person name="Rogers J."/>
            <person name="Rutter S."/>
            <person name="Seeger K."/>
            <person name="Skelton S."/>
            <person name="Squares S."/>
            <person name="Squares R."/>
            <person name="Sulston J.E."/>
            <person name="Taylor K."/>
            <person name="Whitehead S."/>
            <person name="Barrell B.G."/>
        </authorList>
    </citation>
    <scope>NUCLEOTIDE SEQUENCE [LARGE SCALE GENOMIC DNA]</scope>
    <source>
        <strain>ATCC 25618 / H37Rv</strain>
    </source>
</reference>
<reference key="3">
    <citation type="journal article" date="2004" name="J. Mol. Biol.">
        <title>Mycobacterium tuberculosis GroEL homologues unusually exist as lower oligomers and retain the ability to suppress aggregation of substrate proteins.</title>
        <authorList>
            <person name="Qamra R."/>
            <person name="Srinivas V."/>
            <person name="Mande S.C."/>
        </authorList>
    </citation>
    <scope>FUNCTION AS A CHAPERONE</scope>
    <scope>ATPASE ACTIVITY</scope>
    <scope>BIOPHYSICOCHEMICAL PROPERTIES</scope>
    <scope>SUBUNIT</scope>
    <scope>LACK OF ACTIVITY IN E.COLI</scope>
    <source>
        <strain>ATCC 25618 / H37Rv</strain>
    </source>
</reference>
<reference key="4">
    <citation type="journal article" date="2008" name="Infect. Immun.">
        <title>A Mycobacterium tuberculosis mutant lacking the groEL homologue cpn60.1 is viable but fails to induce an inflammatory response in animal models of infection.</title>
        <authorList>
            <person name="Hu Y."/>
            <person name="Henderson B."/>
            <person name="Lund P.A."/>
            <person name="Tormay P."/>
            <person name="Ahmed M.T."/>
            <person name="Gurcha S.S."/>
            <person name="Besra G.S."/>
            <person name="Coates A.R."/>
        </authorList>
    </citation>
    <scope>INDUCTION</scope>
    <scope>DISRUPTION PHENOTYPE</scope>
    <source>
        <strain>ATCC 25618 / H37Rv</strain>
    </source>
</reference>
<reference key="5">
    <citation type="journal article" date="2009" name="J. Bacteriol.">
        <title>The Mycobacterium tuberculosis GroEL1 chaperone is a substrate of Ser/Thr protein kinases.</title>
        <authorList>
            <person name="Canova M.J."/>
            <person name="Kremer L."/>
            <person name="Molle V."/>
        </authorList>
    </citation>
    <scope>PHOSPHORYLATION AT THR-25 AND THR-54</scope>
    <scope>MUTAGENESIS OF THR-25 AND THR-54</scope>
</reference>
<reference key="6">
    <citation type="journal article" date="2009" name="J. Bacteriol.">
        <title>Facilitated oligomerization of mycobacterial GroEL: evidence for phosphorylation-mediated oligomerization.</title>
        <authorList>
            <person name="Kumar C.M."/>
            <person name="Khare G."/>
            <person name="Srikanth C.V."/>
            <person name="Tyagi A.K."/>
            <person name="Sardesai A.A."/>
            <person name="Mande S.C."/>
        </authorList>
    </citation>
    <scope>FUNCTION</scope>
    <scope>ACTIVITY REGULATION</scope>
    <scope>SUBUNIT</scope>
    <scope>PHOSPHORYLATION AT SER-393</scope>
    <scope>LACK OF ACTIVITY IN E.COLI</scope>
</reference>
<reference key="7">
    <citation type="journal article" date="2020" name="J. Bacteriol.">
        <authorList>
            <person name="Kumar C.M.S."/>
            <person name="Khare G."/>
            <person name="Srikanth C.V."/>
            <person name="Tyagi A.K."/>
            <person name="Sardesai A.A."/>
            <person name="Mande S.C."/>
        </authorList>
    </citation>
    <scope>ERRATUM OF PUBMED:19717599</scope>
</reference>
<reference key="8">
    <citation type="journal article" date="2011" name="Mol. Cell. Proteomics">
        <title>Proteogenomic analysis of Mycobacterium tuberculosis by high resolution mass spectrometry.</title>
        <authorList>
            <person name="Kelkar D.S."/>
            <person name="Kumar D."/>
            <person name="Kumar P."/>
            <person name="Balakrishnan L."/>
            <person name="Muthusamy B."/>
            <person name="Yadav A.K."/>
            <person name="Shrivastava P."/>
            <person name="Marimuthu A."/>
            <person name="Anand S."/>
            <person name="Sundaram H."/>
            <person name="Kingsbury R."/>
            <person name="Harsha H.C."/>
            <person name="Nair B."/>
            <person name="Prasad T.S."/>
            <person name="Chauhan D.S."/>
            <person name="Katoch K."/>
            <person name="Katoch V.M."/>
            <person name="Kumar P."/>
            <person name="Chaerkady R."/>
            <person name="Ramachandran S."/>
            <person name="Dash D."/>
            <person name="Pandey A."/>
        </authorList>
    </citation>
    <scope>IDENTIFICATION BY MASS SPECTROMETRY [LARGE SCALE ANALYSIS]</scope>
    <source>
        <strain>ATCC 25618 / H37Rv</strain>
    </source>
</reference>
<reference key="9">
    <citation type="journal article" date="2012" name="Mol. Microbiol.">
        <title>The unusual mycobacterial chaperonins: evidence for in vivo oligomerization and specialization of function.</title>
        <authorList>
            <person name="Fan M."/>
            <person name="Rao T."/>
            <person name="Zacco E."/>
            <person name="Ahmed M.T."/>
            <person name="Shukla A."/>
            <person name="Ojha A."/>
            <person name="Freeke J."/>
            <person name="Robinson C.V."/>
            <person name="Benesch J.L."/>
            <person name="Lund P.A."/>
        </authorList>
    </citation>
    <scope>LACK OF ACTIVITY IN E.COLI</scope>
</reference>
<reference key="10">
    <citation type="journal article" date="2016" name="Tuberculosis">
        <title>Towards understanding the biological function of the unusual chaperonin Cpn60.1 (GroEL1) of Mycobacterium tuberculosis.</title>
        <authorList>
            <person name="Sharma A."/>
            <person name="Rustad T."/>
            <person name="Mahajan G."/>
            <person name="Kumar A."/>
            <person name="Rao K.V."/>
            <person name="Banerjee S."/>
            <person name="Sherman D.R."/>
            <person name="Mande S.C."/>
        </authorList>
    </citation>
    <scope>FUNCTION</scope>
    <scope>DISRUPTION PHENOTYPE</scope>
    <source>
        <strain>H37Rv</strain>
    </source>
</reference>
<reference key="11">
    <citation type="journal article" date="2016" name="Sci. Rep.">
        <title>Biochemical evidence for relaxed substrate specificity of Nalpha-acetyltransferase (Rv3420c/rimI) of Mycobacterium tuberculosis.</title>
        <authorList>
            <person name="Pathak D."/>
            <person name="Bhat A.H."/>
            <person name="Sapehia V."/>
            <person name="Rai J."/>
            <person name="Rao A."/>
        </authorList>
    </citation>
    <scope>ACETYLATION AT SER-2</scope>
    <scope>CLEAVAGE OF INITIATOR METHIONINE</scope>
</reference>
<reference key="12">
    <citation type="journal article" date="2020" name="FEBS Lett.">
        <title>A novel function of Mycobacterium tuberculosis chaperonin paralog GroEL1 in copper homeostasis.</title>
        <authorList>
            <person name="Ansari M.Y."/>
            <person name="Batra S.D."/>
            <person name="Ojha H."/>
            <person name="Dhiman K."/>
            <person name="Ganguly A."/>
            <person name="Tyagi J.S."/>
            <person name="Mande S.C."/>
        </authorList>
    </citation>
    <scope>FUNCTION IN COPPER HOMEOSTASIS</scope>
    <scope>SUBUNIT</scope>
    <scope>DOMAIN</scope>
    <scope>DISRUPTION PHENOTYPE</scope>
    <scope>MUTAGENESIS OF 522-VAL--HIS-539</scope>
</reference>
<reference key="13">
    <citation type="journal article" date="2020" name="Metallomics">
        <title>Interplays between copper and Mycobacterium tuberculosis GroEL1.</title>
        <authorList>
            <person name="Yang D."/>
            <person name="Klebl D.P."/>
            <person name="Zeng S."/>
            <person name="Sobott F."/>
            <person name="Prevost M."/>
            <person name="Soumillion P."/>
            <person name="Vandenbussche G."/>
            <person name="Fontaine V."/>
        </authorList>
    </citation>
    <scope>FUNCTION</scope>
    <scope>ACTIVITY REGULATION</scope>
    <scope>SUBUNIT</scope>
</reference>
<reference evidence="16" key="14">
    <citation type="journal article" date="2011" name="J. Mol. Biol.">
        <title>Structural and functional conservation of Mycobacterium tuberculosis GroEL paralogs suggests that GroEL1 is a chaperonin.</title>
        <authorList>
            <person name="Sielaff B."/>
            <person name="Lee K.S."/>
            <person name="Tsai F.T."/>
        </authorList>
    </citation>
    <scope>X-RAY CRYSTALLOGRAPHY (2.2 ANGSTROMS) OF 184-377</scope>
    <scope>FUNCTION</scope>
    <scope>DOMAIN</scope>
    <source>
        <strain>ATCC 25618 / H37Rv</strain>
    </source>
</reference>
<name>CH601_MYCTU</name>
<evidence type="ECO:0000255" key="1">
    <source>
        <dbReference type="HAMAP-Rule" id="MF_00600"/>
    </source>
</evidence>
<evidence type="ECO:0000269" key="2">
    <source>
    </source>
</evidence>
<evidence type="ECO:0000269" key="3">
    <source>
    </source>
</evidence>
<evidence type="ECO:0000269" key="4">
    <source>
    </source>
</evidence>
<evidence type="ECO:0000269" key="5">
    <source>
    </source>
</evidence>
<evidence type="ECO:0000269" key="6">
    <source>
    </source>
</evidence>
<evidence type="ECO:0000269" key="7">
    <source>
    </source>
</evidence>
<evidence type="ECO:0000269" key="8">
    <source>
    </source>
</evidence>
<evidence type="ECO:0000269" key="9">
    <source>
    </source>
</evidence>
<evidence type="ECO:0000269" key="10">
    <source>
    </source>
</evidence>
<evidence type="ECO:0000269" key="11">
    <source>
    </source>
</evidence>
<evidence type="ECO:0000303" key="12">
    <source>
    </source>
</evidence>
<evidence type="ECO:0000303" key="13">
    <source>
    </source>
</evidence>
<evidence type="ECO:0000305" key="14">
    <source>
    </source>
</evidence>
<evidence type="ECO:0000305" key="15">
    <source>
    </source>
</evidence>
<evidence type="ECO:0007744" key="16">
    <source>
        <dbReference type="PDB" id="3M6C"/>
    </source>
</evidence>
<evidence type="ECO:0007829" key="17">
    <source>
        <dbReference type="PDB" id="3M6C"/>
    </source>
</evidence>
<accession>P9WPE9</accession>
<accession>L0TCP9</accession>
<accession>P0A518</accession>
<accession>Q59573</accession>
<accession>Q59581</accession>